<comment type="function">
    <text evidence="1">Involved in the biosynthesis of the osmoprotectant glycine betaine. Catalyzes the irreversible oxidation of betaine aldehyde to the corresponding acid.</text>
</comment>
<comment type="catalytic activity">
    <reaction evidence="1">
        <text>betaine aldehyde + NAD(+) + H2O = glycine betaine + NADH + 2 H(+)</text>
        <dbReference type="Rhea" id="RHEA:15305"/>
        <dbReference type="ChEBI" id="CHEBI:15377"/>
        <dbReference type="ChEBI" id="CHEBI:15378"/>
        <dbReference type="ChEBI" id="CHEBI:15710"/>
        <dbReference type="ChEBI" id="CHEBI:17750"/>
        <dbReference type="ChEBI" id="CHEBI:57540"/>
        <dbReference type="ChEBI" id="CHEBI:57945"/>
        <dbReference type="EC" id="1.2.1.8"/>
    </reaction>
    <physiologicalReaction direction="left-to-right" evidence="1">
        <dbReference type="Rhea" id="RHEA:15306"/>
    </physiologicalReaction>
</comment>
<comment type="cofactor">
    <cofactor evidence="1">
        <name>K(+)</name>
        <dbReference type="ChEBI" id="CHEBI:29103"/>
    </cofactor>
    <text evidence="1">Binds 2 potassium ions per subunit.</text>
</comment>
<comment type="pathway">
    <text evidence="1">Amine and polyamine biosynthesis; betaine biosynthesis via choline pathway; betaine from betaine aldehyde: step 1/1.</text>
</comment>
<comment type="subunit">
    <text evidence="1">Dimer of dimers.</text>
</comment>
<comment type="similarity">
    <text evidence="1">Belongs to the aldehyde dehydrogenase family.</text>
</comment>
<feature type="chain" id="PRO_1000047040" description="Betaine aldehyde dehydrogenase">
    <location>
        <begin position="1"/>
        <end position="489"/>
    </location>
</feature>
<feature type="active site" description="Charge relay system" evidence="1">
    <location>
        <position position="162"/>
    </location>
</feature>
<feature type="active site" description="Proton acceptor" evidence="1">
    <location>
        <position position="251"/>
    </location>
</feature>
<feature type="active site" description="Nucleophile" evidence="1">
    <location>
        <position position="285"/>
    </location>
</feature>
<feature type="active site" description="Charge relay system" evidence="1">
    <location>
        <position position="463"/>
    </location>
</feature>
<feature type="binding site" evidence="1">
    <location>
        <position position="26"/>
    </location>
    <ligand>
        <name>K(+)</name>
        <dbReference type="ChEBI" id="CHEBI:29103"/>
        <label>1</label>
    </ligand>
</feature>
<feature type="binding site" evidence="1">
    <location>
        <position position="93"/>
    </location>
    <ligand>
        <name>K(+)</name>
        <dbReference type="ChEBI" id="CHEBI:29103"/>
        <label>1</label>
    </ligand>
</feature>
<feature type="binding site" evidence="1">
    <location>
        <begin position="150"/>
        <end position="152"/>
    </location>
    <ligand>
        <name>NAD(+)</name>
        <dbReference type="ChEBI" id="CHEBI:57540"/>
    </ligand>
</feature>
<feature type="binding site" evidence="1">
    <location>
        <begin position="176"/>
        <end position="179"/>
    </location>
    <ligand>
        <name>NAD(+)</name>
        <dbReference type="ChEBI" id="CHEBI:57540"/>
    </ligand>
</feature>
<feature type="binding site" evidence="1">
    <location>
        <position position="180"/>
    </location>
    <ligand>
        <name>K(+)</name>
        <dbReference type="ChEBI" id="CHEBI:29103"/>
        <label>1</label>
    </ligand>
</feature>
<feature type="binding site" evidence="1">
    <location>
        <begin position="229"/>
        <end position="232"/>
    </location>
    <ligand>
        <name>NAD(+)</name>
        <dbReference type="ChEBI" id="CHEBI:57540"/>
    </ligand>
</feature>
<feature type="binding site" evidence="1">
    <location>
        <position position="245"/>
    </location>
    <ligand>
        <name>K(+)</name>
        <dbReference type="ChEBI" id="CHEBI:29103"/>
        <label>2</label>
    </ligand>
</feature>
<feature type="binding site" evidence="1">
    <location>
        <position position="253"/>
    </location>
    <ligand>
        <name>NAD(+)</name>
        <dbReference type="ChEBI" id="CHEBI:57540"/>
    </ligand>
</feature>
<feature type="binding site" description="covalent" evidence="1">
    <location>
        <position position="285"/>
    </location>
    <ligand>
        <name>NAD(+)</name>
        <dbReference type="ChEBI" id="CHEBI:57540"/>
    </ligand>
</feature>
<feature type="binding site" evidence="1">
    <location>
        <position position="386"/>
    </location>
    <ligand>
        <name>NAD(+)</name>
        <dbReference type="ChEBI" id="CHEBI:57540"/>
    </ligand>
</feature>
<feature type="binding site" evidence="1">
    <location>
        <position position="456"/>
    </location>
    <ligand>
        <name>K(+)</name>
        <dbReference type="ChEBI" id="CHEBI:29103"/>
        <label>2</label>
    </ligand>
</feature>
<feature type="binding site" evidence="1">
    <location>
        <position position="459"/>
    </location>
    <ligand>
        <name>K(+)</name>
        <dbReference type="ChEBI" id="CHEBI:29103"/>
        <label>2</label>
    </ligand>
</feature>
<feature type="site" description="Seems to be a necessary countercharge to the potassium cations" evidence="1">
    <location>
        <position position="247"/>
    </location>
</feature>
<feature type="modified residue" description="Cysteine sulfenic acid (-SOH)" evidence="1">
    <location>
        <position position="285"/>
    </location>
</feature>
<protein>
    <recommendedName>
        <fullName evidence="1">Betaine aldehyde dehydrogenase</fullName>
        <shortName evidence="1">BADH</shortName>
        <ecNumber evidence="1">1.2.1.8</ecNumber>
    </recommendedName>
</protein>
<proteinExistence type="inferred from homology"/>
<organism>
    <name type="scientific">Burkholderia lata (strain ATCC 17760 / DSM 23089 / LMG 22485 / NCIMB 9086 / R18194 / 383)</name>
    <dbReference type="NCBI Taxonomy" id="482957"/>
    <lineage>
        <taxon>Bacteria</taxon>
        <taxon>Pseudomonadati</taxon>
        <taxon>Pseudomonadota</taxon>
        <taxon>Betaproteobacteria</taxon>
        <taxon>Burkholderiales</taxon>
        <taxon>Burkholderiaceae</taxon>
        <taxon>Burkholderia</taxon>
        <taxon>Burkholderia cepacia complex</taxon>
    </lineage>
</organism>
<gene>
    <name evidence="1" type="primary">betB</name>
    <name type="ordered locus">Bcep18194_B0554</name>
</gene>
<dbReference type="EC" id="1.2.1.8" evidence="1"/>
<dbReference type="EMBL" id="CP000152">
    <property type="protein sequence ID" value="ABB10668.1"/>
    <property type="molecule type" value="Genomic_DNA"/>
</dbReference>
<dbReference type="RefSeq" id="WP_011354163.1">
    <property type="nucleotide sequence ID" value="NZ_CADFCT010000001.1"/>
</dbReference>
<dbReference type="SMR" id="Q39A43"/>
<dbReference type="GeneID" id="45096930"/>
<dbReference type="KEGG" id="bur:Bcep18194_B0554"/>
<dbReference type="PATRIC" id="fig|482957.22.peg.4157"/>
<dbReference type="HOGENOM" id="CLU_005391_1_0_4"/>
<dbReference type="UniPathway" id="UPA00529">
    <property type="reaction ID" value="UER00386"/>
</dbReference>
<dbReference type="Proteomes" id="UP000002705">
    <property type="component" value="Chromosome 2"/>
</dbReference>
<dbReference type="GO" id="GO:0008802">
    <property type="term" value="F:betaine-aldehyde dehydrogenase (NAD+) activity"/>
    <property type="evidence" value="ECO:0007669"/>
    <property type="project" value="UniProtKB-UniRule"/>
</dbReference>
<dbReference type="GO" id="GO:0046872">
    <property type="term" value="F:metal ion binding"/>
    <property type="evidence" value="ECO:0007669"/>
    <property type="project" value="UniProtKB-KW"/>
</dbReference>
<dbReference type="GO" id="GO:0019285">
    <property type="term" value="P:glycine betaine biosynthetic process from choline"/>
    <property type="evidence" value="ECO:0007669"/>
    <property type="project" value="UniProtKB-UniRule"/>
</dbReference>
<dbReference type="CDD" id="cd07090">
    <property type="entry name" value="ALDH_F9_TMBADH"/>
    <property type="match status" value="1"/>
</dbReference>
<dbReference type="FunFam" id="3.40.309.10:FF:000014">
    <property type="entry name" value="NAD/NADP-dependent betaine aldehyde dehydrogenase"/>
    <property type="match status" value="1"/>
</dbReference>
<dbReference type="FunFam" id="3.40.605.10:FF:000007">
    <property type="entry name" value="NAD/NADP-dependent betaine aldehyde dehydrogenase"/>
    <property type="match status" value="1"/>
</dbReference>
<dbReference type="Gene3D" id="3.40.605.10">
    <property type="entry name" value="Aldehyde Dehydrogenase, Chain A, domain 1"/>
    <property type="match status" value="1"/>
</dbReference>
<dbReference type="Gene3D" id="3.40.309.10">
    <property type="entry name" value="Aldehyde Dehydrogenase, Chain A, domain 2"/>
    <property type="match status" value="1"/>
</dbReference>
<dbReference type="HAMAP" id="MF_00804">
    <property type="entry name" value="BADH"/>
    <property type="match status" value="1"/>
</dbReference>
<dbReference type="InterPro" id="IPR016161">
    <property type="entry name" value="Ald_DH/histidinol_DH"/>
</dbReference>
<dbReference type="InterPro" id="IPR016163">
    <property type="entry name" value="Ald_DH_C"/>
</dbReference>
<dbReference type="InterPro" id="IPR016160">
    <property type="entry name" value="Ald_DH_CS_CYS"/>
</dbReference>
<dbReference type="InterPro" id="IPR029510">
    <property type="entry name" value="Ald_DH_CS_GLU"/>
</dbReference>
<dbReference type="InterPro" id="IPR016162">
    <property type="entry name" value="Ald_DH_N"/>
</dbReference>
<dbReference type="InterPro" id="IPR015590">
    <property type="entry name" value="Aldehyde_DH_dom"/>
</dbReference>
<dbReference type="InterPro" id="IPR011264">
    <property type="entry name" value="BADH"/>
</dbReference>
<dbReference type="NCBIfam" id="TIGR01804">
    <property type="entry name" value="BADH"/>
    <property type="match status" value="1"/>
</dbReference>
<dbReference type="NCBIfam" id="NF009725">
    <property type="entry name" value="PRK13252.1"/>
    <property type="match status" value="1"/>
</dbReference>
<dbReference type="PANTHER" id="PTHR11699">
    <property type="entry name" value="ALDEHYDE DEHYDROGENASE-RELATED"/>
    <property type="match status" value="1"/>
</dbReference>
<dbReference type="Pfam" id="PF00171">
    <property type="entry name" value="Aldedh"/>
    <property type="match status" value="1"/>
</dbReference>
<dbReference type="SUPFAM" id="SSF53720">
    <property type="entry name" value="ALDH-like"/>
    <property type="match status" value="1"/>
</dbReference>
<dbReference type="PROSITE" id="PS00070">
    <property type="entry name" value="ALDEHYDE_DEHYDR_CYS"/>
    <property type="match status" value="1"/>
</dbReference>
<dbReference type="PROSITE" id="PS00687">
    <property type="entry name" value="ALDEHYDE_DEHYDR_GLU"/>
    <property type="match status" value="1"/>
</dbReference>
<accession>Q39A43</accession>
<reference key="1">
    <citation type="submission" date="2005-10" db="EMBL/GenBank/DDBJ databases">
        <title>Complete sequence of chromosome 2 of Burkholderia sp. 383.</title>
        <authorList>
            <consortium name="US DOE Joint Genome Institute"/>
            <person name="Copeland A."/>
            <person name="Lucas S."/>
            <person name="Lapidus A."/>
            <person name="Barry K."/>
            <person name="Detter J.C."/>
            <person name="Glavina T."/>
            <person name="Hammon N."/>
            <person name="Israni S."/>
            <person name="Pitluck S."/>
            <person name="Chain P."/>
            <person name="Malfatti S."/>
            <person name="Shin M."/>
            <person name="Vergez L."/>
            <person name="Schmutz J."/>
            <person name="Larimer F."/>
            <person name="Land M."/>
            <person name="Kyrpides N."/>
            <person name="Lykidis A."/>
            <person name="Richardson P."/>
        </authorList>
    </citation>
    <scope>NUCLEOTIDE SEQUENCE [LARGE SCALE GENOMIC DNA]</scope>
    <source>
        <strain>ATCC 17760 / DSM 23089 / LMG 22485 / NCIMB 9086 / R18194 / 383</strain>
    </source>
</reference>
<evidence type="ECO:0000255" key="1">
    <source>
        <dbReference type="HAMAP-Rule" id="MF_00804"/>
    </source>
</evidence>
<name>BETB_BURL3</name>
<keyword id="KW-0479">Metal-binding</keyword>
<keyword id="KW-0520">NAD</keyword>
<keyword id="KW-0521">NADP</keyword>
<keyword id="KW-0558">Oxidation</keyword>
<keyword id="KW-0560">Oxidoreductase</keyword>
<keyword id="KW-0630">Potassium</keyword>
<sequence>MSVFGLQRLYIGGGYVDATSGKTFDTFDPATGELLAQVQQASAADVDRAVASAQEGQREWAAMTAMQRSRILRRAVDLLRERNDELAALETRDTGKPIGETLAVDIVTGADVIEYYAGLATAIEGLQVPLRAESFVYTRREPLGVCAGIGAWNYPIQIACWKTAPALAAGNAMVFKPSEVTPLTALKLAEIYTEAGVPAGVFNVVQGDGSVGALLTGHPDIAKVSFTGGVETGKKVMSLAGASSLKEVTMELGGKSPLIVFDDADLDRAADIAVTANFFSSGQVCTNGTRVFVHRSIKDAFTQRVLERVKRIRVGKPTDADTNFGPLVSAAQLDKVLGFIESGKAEGAKLLAGGTRLTDGHFGSGQYVAPTVFGDCRDDMKIVREEIFGPVMSILDFESEDEVIARANDTHYGLAAGVVTENLSRAHRTIHRLEAGICWINTWGESPAEMPVGGYKQSGVGRENGITTLEHYTRIKSVQVELGRYNPVF</sequence>